<proteinExistence type="inferred from homology"/>
<keyword id="KW-0997">Cell inner membrane</keyword>
<keyword id="KW-1003">Cell membrane</keyword>
<keyword id="KW-0472">Membrane</keyword>
<keyword id="KW-0808">Transferase</keyword>
<keyword id="KW-0812">Transmembrane</keyword>
<keyword id="KW-1133">Transmembrane helix</keyword>
<protein>
    <recommendedName>
        <fullName evidence="1">Phosphatidylglycerol--prolipoprotein diacylglyceryl transferase</fullName>
        <ecNumber evidence="1">2.5.1.145</ecNumber>
    </recommendedName>
</protein>
<name>LGT_RICB8</name>
<gene>
    <name evidence="1" type="primary">lgt</name>
    <name type="ordered locus">A1I_00065</name>
</gene>
<comment type="function">
    <text evidence="1">Catalyzes the transfer of the diacylglyceryl group from phosphatidylglycerol to the sulfhydryl group of the N-terminal cysteine of a prolipoprotein, the first step in the formation of mature lipoproteins.</text>
</comment>
<comment type="catalytic activity">
    <reaction evidence="1">
        <text>L-cysteinyl-[prolipoprotein] + a 1,2-diacyl-sn-glycero-3-phospho-(1'-sn-glycerol) = an S-1,2-diacyl-sn-glyceryl-L-cysteinyl-[prolipoprotein] + sn-glycerol 1-phosphate + H(+)</text>
        <dbReference type="Rhea" id="RHEA:56712"/>
        <dbReference type="Rhea" id="RHEA-COMP:14679"/>
        <dbReference type="Rhea" id="RHEA-COMP:14680"/>
        <dbReference type="ChEBI" id="CHEBI:15378"/>
        <dbReference type="ChEBI" id="CHEBI:29950"/>
        <dbReference type="ChEBI" id="CHEBI:57685"/>
        <dbReference type="ChEBI" id="CHEBI:64716"/>
        <dbReference type="ChEBI" id="CHEBI:140658"/>
        <dbReference type="EC" id="2.5.1.145"/>
    </reaction>
</comment>
<comment type="pathway">
    <text evidence="1">Protein modification; lipoprotein biosynthesis (diacylglyceryl transfer).</text>
</comment>
<comment type="subcellular location">
    <subcellularLocation>
        <location evidence="1">Cell inner membrane</location>
        <topology evidence="1">Multi-pass membrane protein</topology>
    </subcellularLocation>
</comment>
<comment type="similarity">
    <text evidence="1">Belongs to the Lgt family.</text>
</comment>
<evidence type="ECO:0000255" key="1">
    <source>
        <dbReference type="HAMAP-Rule" id="MF_01147"/>
    </source>
</evidence>
<feature type="chain" id="PRO_1000053492" description="Phosphatidylglycerol--prolipoprotein diacylglyceryl transferase">
    <location>
        <begin position="1"/>
        <end position="263"/>
    </location>
</feature>
<feature type="transmembrane region" description="Helical" evidence="1">
    <location>
        <begin position="16"/>
        <end position="36"/>
    </location>
</feature>
<feature type="transmembrane region" description="Helical" evidence="1">
    <location>
        <begin position="55"/>
        <end position="75"/>
    </location>
</feature>
<feature type="transmembrane region" description="Helical" evidence="1">
    <location>
        <begin position="92"/>
        <end position="112"/>
    </location>
</feature>
<feature type="transmembrane region" description="Helical" evidence="1">
    <location>
        <begin position="117"/>
        <end position="137"/>
    </location>
</feature>
<feature type="transmembrane region" description="Helical" evidence="1">
    <location>
        <begin position="172"/>
        <end position="192"/>
    </location>
</feature>
<feature type="transmembrane region" description="Helical" evidence="1">
    <location>
        <begin position="201"/>
        <end position="221"/>
    </location>
</feature>
<feature type="transmembrane region" description="Helical" evidence="1">
    <location>
        <begin position="234"/>
        <end position="254"/>
    </location>
</feature>
<feature type="binding site" evidence="1">
    <location>
        <position position="138"/>
    </location>
    <ligand>
        <name>a 1,2-diacyl-sn-glycero-3-phospho-(1'-sn-glycerol)</name>
        <dbReference type="ChEBI" id="CHEBI:64716"/>
    </ligand>
</feature>
<reference key="1">
    <citation type="submission" date="2007-09" db="EMBL/GenBank/DDBJ databases">
        <title>Complete genome sequencing of Rickettsia bellii.</title>
        <authorList>
            <person name="Madan A."/>
            <person name="Lee H."/>
            <person name="Madan A."/>
            <person name="Yoon J.-G."/>
            <person name="Ryu G.-Y."/>
            <person name="Dasch G."/>
            <person name="Ereemeva M."/>
        </authorList>
    </citation>
    <scope>NUCLEOTIDE SEQUENCE [LARGE SCALE GENOMIC DNA]</scope>
    <source>
        <strain>OSU 85-389</strain>
    </source>
</reference>
<dbReference type="EC" id="2.5.1.145" evidence="1"/>
<dbReference type="EMBL" id="CP000849">
    <property type="protein sequence ID" value="ABV78425.1"/>
    <property type="molecule type" value="Genomic_DNA"/>
</dbReference>
<dbReference type="RefSeq" id="WP_011476710.1">
    <property type="nucleotide sequence ID" value="NC_009883.1"/>
</dbReference>
<dbReference type="SMR" id="A8GUC9"/>
<dbReference type="KEGG" id="rbo:A1I_00065"/>
<dbReference type="HOGENOM" id="CLU_013386_1_0_5"/>
<dbReference type="UniPathway" id="UPA00664"/>
<dbReference type="GO" id="GO:0005886">
    <property type="term" value="C:plasma membrane"/>
    <property type="evidence" value="ECO:0007669"/>
    <property type="project" value="UniProtKB-SubCell"/>
</dbReference>
<dbReference type="GO" id="GO:0008961">
    <property type="term" value="F:phosphatidylglycerol-prolipoprotein diacylglyceryl transferase activity"/>
    <property type="evidence" value="ECO:0007669"/>
    <property type="project" value="UniProtKB-UniRule"/>
</dbReference>
<dbReference type="GO" id="GO:0042158">
    <property type="term" value="P:lipoprotein biosynthetic process"/>
    <property type="evidence" value="ECO:0007669"/>
    <property type="project" value="UniProtKB-UniRule"/>
</dbReference>
<dbReference type="HAMAP" id="MF_01147">
    <property type="entry name" value="Lgt"/>
    <property type="match status" value="1"/>
</dbReference>
<dbReference type="InterPro" id="IPR001640">
    <property type="entry name" value="Lgt"/>
</dbReference>
<dbReference type="NCBIfam" id="TIGR00544">
    <property type="entry name" value="lgt"/>
    <property type="match status" value="1"/>
</dbReference>
<dbReference type="PANTHER" id="PTHR30589:SF0">
    <property type="entry name" value="PHOSPHATIDYLGLYCEROL--PROLIPOPROTEIN DIACYLGLYCERYL TRANSFERASE"/>
    <property type="match status" value="1"/>
</dbReference>
<dbReference type="PANTHER" id="PTHR30589">
    <property type="entry name" value="PROLIPOPROTEIN DIACYLGLYCERYL TRANSFERASE"/>
    <property type="match status" value="1"/>
</dbReference>
<dbReference type="Pfam" id="PF01790">
    <property type="entry name" value="LGT"/>
    <property type="match status" value="1"/>
</dbReference>
<dbReference type="PROSITE" id="PS01311">
    <property type="entry name" value="LGT"/>
    <property type="match status" value="1"/>
</dbReference>
<sequence length="263" mass="29759">MTFPNINPIIFSVGPLAVSWYSLSYVVGILFGWFYASKIIEKFPTQITKKNLEEFVTYAIIGIIVGGRLGYILLYNPYKYFSNPIEILKTYEGGMSFHGGAIGVIIAAYIFCKRHKLNFLSLTDIIAPVVPIGLFFGRIANFINGELYGRVTNSSIGVIFPDSDLNLRHPSQLYEAFFEGLVLFCILAYAVFKRNTIKKQGLNSGLFLMFYSLFRIIIEIFREPDVQIGFIFDSLTMGQILSMPLLLLGIYLIIKTECRSITK</sequence>
<organism>
    <name type="scientific">Rickettsia bellii (strain OSU 85-389)</name>
    <dbReference type="NCBI Taxonomy" id="391896"/>
    <lineage>
        <taxon>Bacteria</taxon>
        <taxon>Pseudomonadati</taxon>
        <taxon>Pseudomonadota</taxon>
        <taxon>Alphaproteobacteria</taxon>
        <taxon>Rickettsiales</taxon>
        <taxon>Rickettsiaceae</taxon>
        <taxon>Rickettsieae</taxon>
        <taxon>Rickettsia</taxon>
        <taxon>belli group</taxon>
    </lineage>
</organism>
<accession>A8GUC9</accession>